<proteinExistence type="inferred from homology"/>
<dbReference type="EMBL" id="AP009044">
    <property type="protein sequence ID" value="BAF54848.1"/>
    <property type="molecule type" value="Genomic_DNA"/>
</dbReference>
<dbReference type="RefSeq" id="WP_003857561.1">
    <property type="nucleotide sequence ID" value="NC_009342.1"/>
</dbReference>
<dbReference type="SMR" id="A4QF32"/>
<dbReference type="KEGG" id="cgt:cgR_1854"/>
<dbReference type="HOGENOM" id="CLU_040318_2_2_11"/>
<dbReference type="PhylomeDB" id="A4QF32"/>
<dbReference type="Proteomes" id="UP000006698">
    <property type="component" value="Chromosome"/>
</dbReference>
<dbReference type="GO" id="GO:0022627">
    <property type="term" value="C:cytosolic small ribosomal subunit"/>
    <property type="evidence" value="ECO:0007669"/>
    <property type="project" value="TreeGrafter"/>
</dbReference>
<dbReference type="GO" id="GO:0003735">
    <property type="term" value="F:structural constituent of ribosome"/>
    <property type="evidence" value="ECO:0007669"/>
    <property type="project" value="InterPro"/>
</dbReference>
<dbReference type="GO" id="GO:0006412">
    <property type="term" value="P:translation"/>
    <property type="evidence" value="ECO:0007669"/>
    <property type="project" value="UniProtKB-UniRule"/>
</dbReference>
<dbReference type="CDD" id="cd01425">
    <property type="entry name" value="RPS2"/>
    <property type="match status" value="1"/>
</dbReference>
<dbReference type="FunFam" id="1.10.287.610:FF:000001">
    <property type="entry name" value="30S ribosomal protein S2"/>
    <property type="match status" value="1"/>
</dbReference>
<dbReference type="Gene3D" id="3.40.50.10490">
    <property type="entry name" value="Glucose-6-phosphate isomerase like protein, domain 1"/>
    <property type="match status" value="1"/>
</dbReference>
<dbReference type="Gene3D" id="1.10.287.610">
    <property type="entry name" value="Helix hairpin bin"/>
    <property type="match status" value="1"/>
</dbReference>
<dbReference type="HAMAP" id="MF_00291_B">
    <property type="entry name" value="Ribosomal_uS2_B"/>
    <property type="match status" value="1"/>
</dbReference>
<dbReference type="InterPro" id="IPR001865">
    <property type="entry name" value="Ribosomal_uS2"/>
</dbReference>
<dbReference type="InterPro" id="IPR005706">
    <property type="entry name" value="Ribosomal_uS2_bac/mit/plastid"/>
</dbReference>
<dbReference type="InterPro" id="IPR018130">
    <property type="entry name" value="Ribosomal_uS2_CS"/>
</dbReference>
<dbReference type="InterPro" id="IPR023591">
    <property type="entry name" value="Ribosomal_uS2_flav_dom_sf"/>
</dbReference>
<dbReference type="NCBIfam" id="TIGR01011">
    <property type="entry name" value="rpsB_bact"/>
    <property type="match status" value="1"/>
</dbReference>
<dbReference type="PANTHER" id="PTHR12534">
    <property type="entry name" value="30S RIBOSOMAL PROTEIN S2 PROKARYOTIC AND ORGANELLAR"/>
    <property type="match status" value="1"/>
</dbReference>
<dbReference type="PANTHER" id="PTHR12534:SF0">
    <property type="entry name" value="SMALL RIBOSOMAL SUBUNIT PROTEIN US2M"/>
    <property type="match status" value="1"/>
</dbReference>
<dbReference type="Pfam" id="PF00318">
    <property type="entry name" value="Ribosomal_S2"/>
    <property type="match status" value="1"/>
</dbReference>
<dbReference type="PRINTS" id="PR00395">
    <property type="entry name" value="RIBOSOMALS2"/>
</dbReference>
<dbReference type="SUPFAM" id="SSF52313">
    <property type="entry name" value="Ribosomal protein S2"/>
    <property type="match status" value="1"/>
</dbReference>
<dbReference type="PROSITE" id="PS00962">
    <property type="entry name" value="RIBOSOMAL_S2_1"/>
    <property type="match status" value="1"/>
</dbReference>
<organism>
    <name type="scientific">Corynebacterium glutamicum (strain R)</name>
    <dbReference type="NCBI Taxonomy" id="340322"/>
    <lineage>
        <taxon>Bacteria</taxon>
        <taxon>Bacillati</taxon>
        <taxon>Actinomycetota</taxon>
        <taxon>Actinomycetes</taxon>
        <taxon>Mycobacteriales</taxon>
        <taxon>Corynebacteriaceae</taxon>
        <taxon>Corynebacterium</taxon>
    </lineage>
</organism>
<comment type="similarity">
    <text evidence="1">Belongs to the universal ribosomal protein uS2 family.</text>
</comment>
<protein>
    <recommendedName>
        <fullName evidence="1">Small ribosomal subunit protein uS2</fullName>
    </recommendedName>
    <alternativeName>
        <fullName evidence="3">30S ribosomal protein S2</fullName>
    </alternativeName>
</protein>
<sequence length="264" mass="29379">MAVVTMRELLDAGVHFGHQTRRWNPKMRRFIFTERNGIYIIDLQQTLTYIDQAFEFVKETVAHGGTVLFVGTKKQAQEAVQVEADRVGMPYVNHRWLGGMLTNFQTVSKRLNRMKELQAMDAAENGYEGRTKREVLMLTRERTKLERVLGGIAEMTRVPSALWIIDTNKEHIAVAEAHKLNIPVVAILDTNCDPDVVDFPVPGNDDAIRSTALLSRVISTAVEEGKKAREERQLAAAKDAAGDAKPEAEEAPVAAEAEEAPAAE</sequence>
<accession>A4QF32</accession>
<name>RS2_CORGB</name>
<keyword id="KW-0687">Ribonucleoprotein</keyword>
<keyword id="KW-0689">Ribosomal protein</keyword>
<feature type="chain" id="PRO_1000003942" description="Small ribosomal subunit protein uS2">
    <location>
        <begin position="1"/>
        <end position="264"/>
    </location>
</feature>
<feature type="region of interest" description="Disordered" evidence="2">
    <location>
        <begin position="225"/>
        <end position="264"/>
    </location>
</feature>
<evidence type="ECO:0000255" key="1">
    <source>
        <dbReference type="HAMAP-Rule" id="MF_00291"/>
    </source>
</evidence>
<evidence type="ECO:0000256" key="2">
    <source>
        <dbReference type="SAM" id="MobiDB-lite"/>
    </source>
</evidence>
<evidence type="ECO:0000305" key="3"/>
<gene>
    <name evidence="1" type="primary">rpsB</name>
    <name type="ordered locus">cgR_1854</name>
</gene>
<reference key="1">
    <citation type="journal article" date="2007" name="Microbiology">
        <title>Comparative analysis of the Corynebacterium glutamicum group and complete genome sequence of strain R.</title>
        <authorList>
            <person name="Yukawa H."/>
            <person name="Omumasaba C.A."/>
            <person name="Nonaka H."/>
            <person name="Kos P."/>
            <person name="Okai N."/>
            <person name="Suzuki N."/>
            <person name="Suda M."/>
            <person name="Tsuge Y."/>
            <person name="Watanabe J."/>
            <person name="Ikeda Y."/>
            <person name="Vertes A.A."/>
            <person name="Inui M."/>
        </authorList>
    </citation>
    <scope>NUCLEOTIDE SEQUENCE [LARGE SCALE GENOMIC DNA]</scope>
    <source>
        <strain>R</strain>
    </source>
</reference>